<comment type="function">
    <text evidence="1">Part of the ABC transporter complex AraFGH involved in arabinose import. Responsible for energy coupling to the transport system.</text>
</comment>
<comment type="catalytic activity">
    <reaction evidence="1">
        <text>L-arabinose(out) + ATP + H2O = L-arabinose(in) + ADP + phosphate + H(+)</text>
        <dbReference type="Rhea" id="RHEA:30007"/>
        <dbReference type="ChEBI" id="CHEBI:15377"/>
        <dbReference type="ChEBI" id="CHEBI:15378"/>
        <dbReference type="ChEBI" id="CHEBI:17535"/>
        <dbReference type="ChEBI" id="CHEBI:30616"/>
        <dbReference type="ChEBI" id="CHEBI:43474"/>
        <dbReference type="ChEBI" id="CHEBI:456216"/>
        <dbReference type="EC" id="7.5.2.12"/>
    </reaction>
</comment>
<comment type="subunit">
    <text evidence="1">The complex is composed of two ATP-binding proteins (AraG), two transmembrane proteins (AraH) and a solute-binding protein (AraF).</text>
</comment>
<comment type="subcellular location">
    <subcellularLocation>
        <location evidence="1">Cell inner membrane</location>
        <topology evidence="1">Peripheral membrane protein</topology>
    </subcellularLocation>
</comment>
<comment type="similarity">
    <text evidence="1">Belongs to the ABC transporter superfamily. Arabinose importer (TC 3.A.1.2.2) family.</text>
</comment>
<dbReference type="EC" id="7.5.2.12" evidence="1"/>
<dbReference type="EMBL" id="CP000058">
    <property type="protein sequence ID" value="AAZ34461.1"/>
    <property type="molecule type" value="Genomic_DNA"/>
</dbReference>
<dbReference type="RefSeq" id="WP_005757844.1">
    <property type="nucleotide sequence ID" value="NC_005773.3"/>
</dbReference>
<dbReference type="SMR" id="Q48IS7"/>
<dbReference type="KEGG" id="psp:PSPPH_2507"/>
<dbReference type="eggNOG" id="COG1129">
    <property type="taxonomic scope" value="Bacteria"/>
</dbReference>
<dbReference type="HOGENOM" id="CLU_000604_92_3_6"/>
<dbReference type="Proteomes" id="UP000000551">
    <property type="component" value="Chromosome"/>
</dbReference>
<dbReference type="GO" id="GO:0005886">
    <property type="term" value="C:plasma membrane"/>
    <property type="evidence" value="ECO:0007669"/>
    <property type="project" value="UniProtKB-SubCell"/>
</dbReference>
<dbReference type="GO" id="GO:0015612">
    <property type="term" value="F:ABC-type L-arabinose transporter activity"/>
    <property type="evidence" value="ECO:0007669"/>
    <property type="project" value="UniProtKB-EC"/>
</dbReference>
<dbReference type="GO" id="GO:0005524">
    <property type="term" value="F:ATP binding"/>
    <property type="evidence" value="ECO:0007669"/>
    <property type="project" value="UniProtKB-KW"/>
</dbReference>
<dbReference type="GO" id="GO:0016887">
    <property type="term" value="F:ATP hydrolysis activity"/>
    <property type="evidence" value="ECO:0007669"/>
    <property type="project" value="InterPro"/>
</dbReference>
<dbReference type="CDD" id="cd03216">
    <property type="entry name" value="ABC_Carb_Monos_I"/>
    <property type="match status" value="1"/>
</dbReference>
<dbReference type="CDD" id="cd03215">
    <property type="entry name" value="ABC_Carb_Monos_II"/>
    <property type="match status" value="1"/>
</dbReference>
<dbReference type="FunFam" id="3.40.50.300:FF:000126">
    <property type="entry name" value="Galactose/methyl galactoside import ATP-binding protein MglA"/>
    <property type="match status" value="1"/>
</dbReference>
<dbReference type="FunFam" id="3.40.50.300:FF:000127">
    <property type="entry name" value="Ribose import ATP-binding protein RbsA"/>
    <property type="match status" value="1"/>
</dbReference>
<dbReference type="Gene3D" id="3.40.50.300">
    <property type="entry name" value="P-loop containing nucleotide triphosphate hydrolases"/>
    <property type="match status" value="2"/>
</dbReference>
<dbReference type="InterPro" id="IPR003593">
    <property type="entry name" value="AAA+_ATPase"/>
</dbReference>
<dbReference type="InterPro" id="IPR050107">
    <property type="entry name" value="ABC_carbohydrate_import_ATPase"/>
</dbReference>
<dbReference type="InterPro" id="IPR003439">
    <property type="entry name" value="ABC_transporter-like_ATP-bd"/>
</dbReference>
<dbReference type="InterPro" id="IPR017871">
    <property type="entry name" value="ABC_transporter-like_CS"/>
</dbReference>
<dbReference type="InterPro" id="IPR027417">
    <property type="entry name" value="P-loop_NTPase"/>
</dbReference>
<dbReference type="NCBIfam" id="NF008442">
    <property type="entry name" value="PRK11288.1"/>
    <property type="match status" value="1"/>
</dbReference>
<dbReference type="PANTHER" id="PTHR43790:SF6">
    <property type="entry name" value="ARABINOSE IMPORT ATP-BINDING PROTEIN ARAG"/>
    <property type="match status" value="1"/>
</dbReference>
<dbReference type="PANTHER" id="PTHR43790">
    <property type="entry name" value="CARBOHYDRATE TRANSPORT ATP-BINDING PROTEIN MG119-RELATED"/>
    <property type="match status" value="1"/>
</dbReference>
<dbReference type="Pfam" id="PF00005">
    <property type="entry name" value="ABC_tran"/>
    <property type="match status" value="2"/>
</dbReference>
<dbReference type="SMART" id="SM00382">
    <property type="entry name" value="AAA"/>
    <property type="match status" value="2"/>
</dbReference>
<dbReference type="SUPFAM" id="SSF52540">
    <property type="entry name" value="P-loop containing nucleoside triphosphate hydrolases"/>
    <property type="match status" value="2"/>
</dbReference>
<dbReference type="PROSITE" id="PS00211">
    <property type="entry name" value="ABC_TRANSPORTER_1"/>
    <property type="match status" value="2"/>
</dbReference>
<dbReference type="PROSITE" id="PS50893">
    <property type="entry name" value="ABC_TRANSPORTER_2"/>
    <property type="match status" value="2"/>
</dbReference>
<dbReference type="PROSITE" id="PS51268">
    <property type="entry name" value="ARAG"/>
    <property type="match status" value="1"/>
</dbReference>
<sequence>MQQAIEQTSINGALRFNGIGKVFPGVKALSDISFEARPGSVHALMGENGAGKSTLLKILGGSYQPNSGTLQIGEQSYQFKSTAESIAAGVAVIHQELHLVPEMTVAENLLLGHMPNRFGLINRGAMYRRAGELLKGLADEIDPRTRLGDLSLGQRQLVEIAKAMSRNAHVIAFDEPTSSLSAREIDRLMAIIVRLRDEGRVILYVSHRMEEIFRVCDAVTVFKDGRFVKTFEQMADLDHDRLVTCMVGRDIQNIYNYRPRQHQGPSLRVTGLLGPGLHEPVSFAVEKGEVLGFFGLVGAGRTELFRLLSGLTRSTAGTLQLDGKPLTLKSPRDSIEAGILLCPEDRKKEGIVPLSSVAENINIGARPRHVNLGCLIQGRWERDNARSQIKSMNVKTPSPEQQIMFLSGGNQQKAILGRWLSMPMKVLLLDEPTRGIDVGAKSEIYEIIHNLAADGIAVIVVSSDLMEVMGISDRILVMSEGAITGELNRDEADESRLLQLALPRTRS</sequence>
<evidence type="ECO:0000255" key="1">
    <source>
        <dbReference type="HAMAP-Rule" id="MF_01721"/>
    </source>
</evidence>
<accession>Q48IS7</accession>
<protein>
    <recommendedName>
        <fullName evidence="1">Arabinose import ATP-binding protein AraG</fullName>
        <ecNumber evidence="1">7.5.2.12</ecNumber>
    </recommendedName>
</protein>
<reference key="1">
    <citation type="journal article" date="2005" name="J. Bacteriol.">
        <title>Whole-genome sequence analysis of Pseudomonas syringae pv. phaseolicola 1448A reveals divergence among pathovars in genes involved in virulence and transposition.</title>
        <authorList>
            <person name="Joardar V."/>
            <person name="Lindeberg M."/>
            <person name="Jackson R.W."/>
            <person name="Selengut J."/>
            <person name="Dodson R."/>
            <person name="Brinkac L.M."/>
            <person name="Daugherty S.C."/>
            <person name="DeBoy R.T."/>
            <person name="Durkin A.S."/>
            <person name="Gwinn Giglio M."/>
            <person name="Madupu R."/>
            <person name="Nelson W.C."/>
            <person name="Rosovitz M.J."/>
            <person name="Sullivan S.A."/>
            <person name="Crabtree J."/>
            <person name="Creasy T."/>
            <person name="Davidsen T.M."/>
            <person name="Haft D.H."/>
            <person name="Zafar N."/>
            <person name="Zhou L."/>
            <person name="Halpin R."/>
            <person name="Holley T."/>
            <person name="Khouri H.M."/>
            <person name="Feldblyum T.V."/>
            <person name="White O."/>
            <person name="Fraser C.M."/>
            <person name="Chatterjee A.K."/>
            <person name="Cartinhour S."/>
            <person name="Schneider D."/>
            <person name="Mansfield J.W."/>
            <person name="Collmer A."/>
            <person name="Buell R."/>
        </authorList>
    </citation>
    <scope>NUCLEOTIDE SEQUENCE [LARGE SCALE GENOMIC DNA]</scope>
    <source>
        <strain>1448A / Race 6</strain>
    </source>
</reference>
<keyword id="KW-0067">ATP-binding</keyword>
<keyword id="KW-0997">Cell inner membrane</keyword>
<keyword id="KW-1003">Cell membrane</keyword>
<keyword id="KW-0472">Membrane</keyword>
<keyword id="KW-0547">Nucleotide-binding</keyword>
<keyword id="KW-0677">Repeat</keyword>
<keyword id="KW-0762">Sugar transport</keyword>
<keyword id="KW-1278">Translocase</keyword>
<keyword id="KW-0813">Transport</keyword>
<proteinExistence type="inferred from homology"/>
<organism>
    <name type="scientific">Pseudomonas savastanoi pv. phaseolicola (strain 1448A / Race 6)</name>
    <name type="common">Pseudomonas syringae pv. phaseolicola (strain 1448A / Race 6)</name>
    <dbReference type="NCBI Taxonomy" id="264730"/>
    <lineage>
        <taxon>Bacteria</taxon>
        <taxon>Pseudomonadati</taxon>
        <taxon>Pseudomonadota</taxon>
        <taxon>Gammaproteobacteria</taxon>
        <taxon>Pseudomonadales</taxon>
        <taxon>Pseudomonadaceae</taxon>
        <taxon>Pseudomonas</taxon>
    </lineage>
</organism>
<feature type="chain" id="PRO_0000270471" description="Arabinose import ATP-binding protein AraG">
    <location>
        <begin position="1"/>
        <end position="507"/>
    </location>
</feature>
<feature type="domain" description="ABC transporter 1" evidence="1">
    <location>
        <begin position="14"/>
        <end position="249"/>
    </location>
</feature>
<feature type="domain" description="ABC transporter 2" evidence="1">
    <location>
        <begin position="249"/>
        <end position="505"/>
    </location>
</feature>
<feature type="binding site" evidence="1">
    <location>
        <begin position="46"/>
        <end position="53"/>
    </location>
    <ligand>
        <name>ATP</name>
        <dbReference type="ChEBI" id="CHEBI:30616"/>
    </ligand>
</feature>
<gene>
    <name evidence="1" type="primary">araG</name>
    <name type="ordered locus">PSPPH_2507</name>
</gene>
<name>ARAG_PSE14</name>